<feature type="chain" id="PRO_1000073551" description="tRNA(Met) cytidine acetate ligase">
    <location>
        <begin position="1"/>
        <end position="383"/>
    </location>
</feature>
<feature type="binding site" evidence="1">
    <location>
        <begin position="7"/>
        <end position="20"/>
    </location>
    <ligand>
        <name>ATP</name>
        <dbReference type="ChEBI" id="CHEBI:30616"/>
    </ligand>
</feature>
<feature type="binding site" evidence="1">
    <location>
        <position position="101"/>
    </location>
    <ligand>
        <name>ATP</name>
        <dbReference type="ChEBI" id="CHEBI:30616"/>
    </ligand>
</feature>
<feature type="binding site" evidence="1">
    <location>
        <position position="153"/>
    </location>
    <ligand>
        <name>ATP</name>
        <dbReference type="ChEBI" id="CHEBI:30616"/>
    </ligand>
</feature>
<feature type="binding site" evidence="1">
    <location>
        <begin position="178"/>
        <end position="179"/>
    </location>
    <ligand>
        <name>ATP</name>
        <dbReference type="ChEBI" id="CHEBI:30616"/>
    </ligand>
</feature>
<proteinExistence type="inferred from homology"/>
<protein>
    <recommendedName>
        <fullName evidence="1">tRNA(Met) cytidine acetate ligase</fullName>
        <ecNumber evidence="1">6.3.4.-</ecNumber>
    </recommendedName>
</protein>
<comment type="function">
    <text evidence="1">Catalyzes the formation of N(4)-acetylcytidine (ac(4)C) at the wobble position of elongator tRNA(Met), using acetate and ATP as substrates. First activates an acetate ion to form acetyladenylate (Ac-AMP) and then transfers the acetyl group to tRNA to form ac(4)C34.</text>
</comment>
<comment type="catalytic activity">
    <reaction evidence="1">
        <text>cytidine(34) in elongator tRNA(Met) + acetate + ATP = N(4)-acetylcytidine(34) in elongator tRNA(Met) + AMP + diphosphate</text>
        <dbReference type="Rhea" id="RHEA:58144"/>
        <dbReference type="Rhea" id="RHEA-COMP:10693"/>
        <dbReference type="Rhea" id="RHEA-COMP:10694"/>
        <dbReference type="ChEBI" id="CHEBI:30089"/>
        <dbReference type="ChEBI" id="CHEBI:30616"/>
        <dbReference type="ChEBI" id="CHEBI:33019"/>
        <dbReference type="ChEBI" id="CHEBI:74900"/>
        <dbReference type="ChEBI" id="CHEBI:82748"/>
        <dbReference type="ChEBI" id="CHEBI:456215"/>
    </reaction>
</comment>
<comment type="subcellular location">
    <subcellularLocation>
        <location evidence="1">Cytoplasm</location>
    </subcellularLocation>
</comment>
<comment type="similarity">
    <text evidence="1">Belongs to the TmcAL family.</text>
</comment>
<keyword id="KW-0067">ATP-binding</keyword>
<keyword id="KW-0963">Cytoplasm</keyword>
<keyword id="KW-0436">Ligase</keyword>
<keyword id="KW-0547">Nucleotide-binding</keyword>
<keyword id="KW-0694">RNA-binding</keyword>
<keyword id="KW-0819">tRNA processing</keyword>
<keyword id="KW-0820">tRNA-binding</keyword>
<evidence type="ECO:0000255" key="1">
    <source>
        <dbReference type="HAMAP-Rule" id="MF_01539"/>
    </source>
</evidence>
<organism>
    <name type="scientific">Lactobacillus helveticus (strain DPC 4571)</name>
    <dbReference type="NCBI Taxonomy" id="405566"/>
    <lineage>
        <taxon>Bacteria</taxon>
        <taxon>Bacillati</taxon>
        <taxon>Bacillota</taxon>
        <taxon>Bacilli</taxon>
        <taxon>Lactobacillales</taxon>
        <taxon>Lactobacillaceae</taxon>
        <taxon>Lactobacillus</taxon>
    </lineage>
</organism>
<sequence length="383" mass="43527">MSVVGIIAEFNPFHSGHEFLLNQARLIAGNDPIVVVMSGNYVQRGEMAIMSKYQRAKVALQSGADLVFETPFSTAVEPADLFSLGNIEQLAKLGVTDLVFGVENANLNFAYLGSKIAEIPQNHMDFKDYSQTYSTQYNQMVAREVGHEVNQPNAILGLAYAVANHNLGSPLKLHPVNRIGAGHDDLLQRNGVVQSASAIRNLLLHGEDTSNLKYWVPKAEAIELSKQEIYPNWNLLYPFLKYRIESSSIDDLRQIYQMSEGLEYKMKQEIHLSRDFTEFLRRIKSKRYTYSRLRRLSLYTLLNVTQDDMIASFNEESLMLLGFSKTGRQYLKKNRKDFQTEIISKVDKRSAKSGSLALQVRTDRLFEQIMGVDQNFGQRPIEV</sequence>
<gene>
    <name evidence="1" type="primary">tmcAL</name>
    <name type="ordered locus">lhv_1590</name>
</gene>
<reference key="1">
    <citation type="journal article" date="2008" name="J. Bacteriol.">
        <title>Genome sequence of Lactobacillus helveticus: an organism distinguished by selective gene loss and IS element expansion.</title>
        <authorList>
            <person name="Callanan M."/>
            <person name="Kaleta P."/>
            <person name="O'Callaghan J."/>
            <person name="O'Sullivan O."/>
            <person name="Jordan K."/>
            <person name="McAuliffe O."/>
            <person name="Sangrador-Vegas A."/>
            <person name="Slattery L."/>
            <person name="Fitzgerald G.F."/>
            <person name="Beresford T."/>
            <person name="Ross R.P."/>
        </authorList>
    </citation>
    <scope>NUCLEOTIDE SEQUENCE [LARGE SCALE GENOMIC DNA]</scope>
    <source>
        <strain>DPC 4571</strain>
    </source>
</reference>
<dbReference type="EC" id="6.3.4.-" evidence="1"/>
<dbReference type="EMBL" id="CP000517">
    <property type="protein sequence ID" value="ABX27512.1"/>
    <property type="molecule type" value="Genomic_DNA"/>
</dbReference>
<dbReference type="RefSeq" id="WP_012212118.1">
    <property type="nucleotide sequence ID" value="NC_010080.1"/>
</dbReference>
<dbReference type="SMR" id="A8YWC6"/>
<dbReference type="KEGG" id="lhe:lhv_1590"/>
<dbReference type="eggNOG" id="COG1323">
    <property type="taxonomic scope" value="Bacteria"/>
</dbReference>
<dbReference type="HOGENOM" id="CLU_038915_0_2_9"/>
<dbReference type="Proteomes" id="UP000000790">
    <property type="component" value="Chromosome"/>
</dbReference>
<dbReference type="GO" id="GO:0005737">
    <property type="term" value="C:cytoplasm"/>
    <property type="evidence" value="ECO:0007669"/>
    <property type="project" value="UniProtKB-SubCell"/>
</dbReference>
<dbReference type="GO" id="GO:0005524">
    <property type="term" value="F:ATP binding"/>
    <property type="evidence" value="ECO:0007669"/>
    <property type="project" value="UniProtKB-KW"/>
</dbReference>
<dbReference type="GO" id="GO:0016879">
    <property type="term" value="F:ligase activity, forming carbon-nitrogen bonds"/>
    <property type="evidence" value="ECO:0007669"/>
    <property type="project" value="UniProtKB-UniRule"/>
</dbReference>
<dbReference type="GO" id="GO:0000049">
    <property type="term" value="F:tRNA binding"/>
    <property type="evidence" value="ECO:0007669"/>
    <property type="project" value="UniProtKB-KW"/>
</dbReference>
<dbReference type="GO" id="GO:0006400">
    <property type="term" value="P:tRNA modification"/>
    <property type="evidence" value="ECO:0007669"/>
    <property type="project" value="UniProtKB-UniRule"/>
</dbReference>
<dbReference type="Gene3D" id="3.40.50.620">
    <property type="entry name" value="HUPs"/>
    <property type="match status" value="1"/>
</dbReference>
<dbReference type="HAMAP" id="MF_01539">
    <property type="entry name" value="TmcAL"/>
    <property type="match status" value="1"/>
</dbReference>
<dbReference type="InterPro" id="IPR014729">
    <property type="entry name" value="Rossmann-like_a/b/a_fold"/>
</dbReference>
<dbReference type="InterPro" id="IPR008513">
    <property type="entry name" value="tRNA(Met)_cyd_acetate_ligase"/>
</dbReference>
<dbReference type="NCBIfam" id="NF010191">
    <property type="entry name" value="PRK13670.1"/>
    <property type="match status" value="1"/>
</dbReference>
<dbReference type="PANTHER" id="PTHR37825">
    <property type="entry name" value="TRNA(MET) CYTIDINE ACETATE LIGASE"/>
    <property type="match status" value="1"/>
</dbReference>
<dbReference type="PANTHER" id="PTHR37825:SF1">
    <property type="entry name" value="TRNA(MET) CYTIDINE ACETATE LIGASE"/>
    <property type="match status" value="1"/>
</dbReference>
<dbReference type="Pfam" id="PF05636">
    <property type="entry name" value="HIGH_NTase1"/>
    <property type="match status" value="1"/>
</dbReference>
<dbReference type="SUPFAM" id="SSF52374">
    <property type="entry name" value="Nucleotidylyl transferase"/>
    <property type="match status" value="1"/>
</dbReference>
<accession>A8YWC6</accession>
<name>TMCAL_LACH4</name>